<name>LPXD_BRUC2</name>
<dbReference type="EC" id="2.3.1.191" evidence="1"/>
<dbReference type="EMBL" id="CP000872">
    <property type="protein sequence ID" value="ABX62221.1"/>
    <property type="molecule type" value="Genomic_DNA"/>
</dbReference>
<dbReference type="RefSeq" id="WP_002964281.1">
    <property type="nucleotide sequence ID" value="NC_010103.1"/>
</dbReference>
<dbReference type="SMR" id="A9M5G6"/>
<dbReference type="GeneID" id="97533596"/>
<dbReference type="KEGG" id="bcs:BCAN_A1172"/>
<dbReference type="HOGENOM" id="CLU_049865_0_2_5"/>
<dbReference type="PhylomeDB" id="A9M5G6"/>
<dbReference type="UniPathway" id="UPA00973"/>
<dbReference type="Proteomes" id="UP000001385">
    <property type="component" value="Chromosome I"/>
</dbReference>
<dbReference type="GO" id="GO:0016020">
    <property type="term" value="C:membrane"/>
    <property type="evidence" value="ECO:0007669"/>
    <property type="project" value="GOC"/>
</dbReference>
<dbReference type="GO" id="GO:0016410">
    <property type="term" value="F:N-acyltransferase activity"/>
    <property type="evidence" value="ECO:0007669"/>
    <property type="project" value="InterPro"/>
</dbReference>
<dbReference type="GO" id="GO:0009245">
    <property type="term" value="P:lipid A biosynthetic process"/>
    <property type="evidence" value="ECO:0007669"/>
    <property type="project" value="UniProtKB-UniRule"/>
</dbReference>
<dbReference type="CDD" id="cd03352">
    <property type="entry name" value="LbH_LpxD"/>
    <property type="match status" value="1"/>
</dbReference>
<dbReference type="Gene3D" id="2.160.10.10">
    <property type="entry name" value="Hexapeptide repeat proteins"/>
    <property type="match status" value="1"/>
</dbReference>
<dbReference type="Gene3D" id="3.40.1390.10">
    <property type="entry name" value="MurE/MurF, N-terminal domain"/>
    <property type="match status" value="1"/>
</dbReference>
<dbReference type="HAMAP" id="MF_00523">
    <property type="entry name" value="LpxD"/>
    <property type="match status" value="1"/>
</dbReference>
<dbReference type="InterPro" id="IPR001451">
    <property type="entry name" value="Hexapep"/>
</dbReference>
<dbReference type="InterPro" id="IPR018357">
    <property type="entry name" value="Hexapep_transf_CS"/>
</dbReference>
<dbReference type="InterPro" id="IPR007691">
    <property type="entry name" value="LpxD"/>
</dbReference>
<dbReference type="InterPro" id="IPR011004">
    <property type="entry name" value="Trimer_LpxA-like_sf"/>
</dbReference>
<dbReference type="InterPro" id="IPR020573">
    <property type="entry name" value="UDP_GlcNAc_AcTrfase_non-rep"/>
</dbReference>
<dbReference type="NCBIfam" id="TIGR01853">
    <property type="entry name" value="lipid_A_lpxD"/>
    <property type="match status" value="1"/>
</dbReference>
<dbReference type="NCBIfam" id="NF002060">
    <property type="entry name" value="PRK00892.1"/>
    <property type="match status" value="1"/>
</dbReference>
<dbReference type="PANTHER" id="PTHR43378">
    <property type="entry name" value="UDP-3-O-ACYLGLUCOSAMINE N-ACYLTRANSFERASE"/>
    <property type="match status" value="1"/>
</dbReference>
<dbReference type="PANTHER" id="PTHR43378:SF2">
    <property type="entry name" value="UDP-3-O-ACYLGLUCOSAMINE N-ACYLTRANSFERASE 1, MITOCHONDRIAL-RELATED"/>
    <property type="match status" value="1"/>
</dbReference>
<dbReference type="Pfam" id="PF00132">
    <property type="entry name" value="Hexapep"/>
    <property type="match status" value="2"/>
</dbReference>
<dbReference type="Pfam" id="PF04613">
    <property type="entry name" value="LpxD"/>
    <property type="match status" value="1"/>
</dbReference>
<dbReference type="SUPFAM" id="SSF51161">
    <property type="entry name" value="Trimeric LpxA-like enzymes"/>
    <property type="match status" value="1"/>
</dbReference>
<dbReference type="PROSITE" id="PS00101">
    <property type="entry name" value="HEXAPEP_TRANSFERASES"/>
    <property type="match status" value="1"/>
</dbReference>
<reference key="1">
    <citation type="submission" date="2007-10" db="EMBL/GenBank/DDBJ databases">
        <title>Brucella canis ATCC 23365 whole genome shotgun sequencing project.</title>
        <authorList>
            <person name="Setubal J.C."/>
            <person name="Bowns C."/>
            <person name="Boyle S."/>
            <person name="Crasta O.R."/>
            <person name="Czar M.J."/>
            <person name="Dharmanolla C."/>
            <person name="Gillespie J.J."/>
            <person name="Kenyon R.W."/>
            <person name="Lu J."/>
            <person name="Mane S."/>
            <person name="Mohapatra S."/>
            <person name="Nagrani S."/>
            <person name="Purkayastha A."/>
            <person name="Rajasimha H.K."/>
            <person name="Shallom J.M."/>
            <person name="Shallom S."/>
            <person name="Shukla M."/>
            <person name="Snyder E.E."/>
            <person name="Sobral B.W."/>
            <person name="Wattam A.R."/>
            <person name="Will R."/>
            <person name="Williams K."/>
            <person name="Yoo H."/>
            <person name="Bruce D."/>
            <person name="Detter C."/>
            <person name="Munk C."/>
            <person name="Brettin T.S."/>
        </authorList>
    </citation>
    <scope>NUCLEOTIDE SEQUENCE [LARGE SCALE GENOMIC DNA]</scope>
    <source>
        <strain>ATCC 23365 / NCTC 10854 / RM-666</strain>
    </source>
</reference>
<sequence length="351" mass="36357">MADPIFFKPSRELTIGDVADFTGASLRDPKLAPRSVERLASLKDAGEGALVFVEGKKNVSSLVGLKAAGVLCTESLADSVPSGIAVLVSRHPHRDFSAVGRMLFPASVRPESWLGETGISPAAFIHPTAQIEDGATVEAGAVIGSGVTIGAGTLIAATAVIGQNCQIGRNSYIAPGVSVQCAFIGNNVSLHPGVRIGQDGFGYVPGAAGLDKVPQLGRVIIQDNVEIGANTTVDRGSLDDTVIGEGTKIDNLVQIAHNVRIGRFCLVAAHCGISGSCVIGDQTMLGGRVGLADHLIIGSRVQVAAASGVMNDIPDGERWGGIPARPIKQWFRDIANIRSIGQSRKDASSDE</sequence>
<feature type="chain" id="PRO_1000081684" description="UDP-3-O-acylglucosamine N-acyltransferase">
    <location>
        <begin position="1"/>
        <end position="351"/>
    </location>
</feature>
<feature type="active site" description="Proton acceptor" evidence="1">
    <location>
        <position position="257"/>
    </location>
</feature>
<protein>
    <recommendedName>
        <fullName evidence="1">UDP-3-O-acylglucosamine N-acyltransferase</fullName>
        <ecNumber evidence="1">2.3.1.191</ecNumber>
    </recommendedName>
</protein>
<keyword id="KW-0012">Acyltransferase</keyword>
<keyword id="KW-0441">Lipid A biosynthesis</keyword>
<keyword id="KW-0444">Lipid biosynthesis</keyword>
<keyword id="KW-0443">Lipid metabolism</keyword>
<keyword id="KW-1185">Reference proteome</keyword>
<keyword id="KW-0677">Repeat</keyword>
<keyword id="KW-0808">Transferase</keyword>
<comment type="function">
    <text evidence="1">Catalyzes the N-acylation of UDP-3-O-acylglucosamine using 3-hydroxyacyl-ACP as the acyl donor. Is involved in the biosynthesis of lipid A, a phosphorylated glycolipid that anchors the lipopolysaccharide to the outer membrane of the cell.</text>
</comment>
<comment type="catalytic activity">
    <reaction evidence="1">
        <text>a UDP-3-O-[(3R)-3-hydroxyacyl]-alpha-D-glucosamine + a (3R)-hydroxyacyl-[ACP] = a UDP-2-N,3-O-bis[(3R)-3-hydroxyacyl]-alpha-D-glucosamine + holo-[ACP] + H(+)</text>
        <dbReference type="Rhea" id="RHEA:53836"/>
        <dbReference type="Rhea" id="RHEA-COMP:9685"/>
        <dbReference type="Rhea" id="RHEA-COMP:9945"/>
        <dbReference type="ChEBI" id="CHEBI:15378"/>
        <dbReference type="ChEBI" id="CHEBI:64479"/>
        <dbReference type="ChEBI" id="CHEBI:78827"/>
        <dbReference type="ChEBI" id="CHEBI:137740"/>
        <dbReference type="ChEBI" id="CHEBI:137748"/>
        <dbReference type="EC" id="2.3.1.191"/>
    </reaction>
</comment>
<comment type="pathway">
    <text evidence="1">Bacterial outer membrane biogenesis; LPS lipid A biosynthesis.</text>
</comment>
<comment type="subunit">
    <text evidence="1">Homotrimer.</text>
</comment>
<comment type="similarity">
    <text evidence="1">Belongs to the transferase hexapeptide repeat family. LpxD subfamily.</text>
</comment>
<evidence type="ECO:0000255" key="1">
    <source>
        <dbReference type="HAMAP-Rule" id="MF_00523"/>
    </source>
</evidence>
<accession>A9M5G6</accession>
<proteinExistence type="inferred from homology"/>
<organism>
    <name type="scientific">Brucella canis (strain ATCC 23365 / NCTC 10854 / RM-666)</name>
    <dbReference type="NCBI Taxonomy" id="483179"/>
    <lineage>
        <taxon>Bacteria</taxon>
        <taxon>Pseudomonadati</taxon>
        <taxon>Pseudomonadota</taxon>
        <taxon>Alphaproteobacteria</taxon>
        <taxon>Hyphomicrobiales</taxon>
        <taxon>Brucellaceae</taxon>
        <taxon>Brucella/Ochrobactrum group</taxon>
        <taxon>Brucella</taxon>
    </lineage>
</organism>
<gene>
    <name evidence="1" type="primary">lpxD</name>
    <name type="ordered locus">BCAN_A1172</name>
</gene>